<feature type="chain" id="PRO_0000316556" description="Uncharacterized WD repeat-containing protein C4F10.18">
    <location>
        <begin position="1"/>
        <end position="391"/>
    </location>
</feature>
<feature type="repeat" description="WD 1">
    <location>
        <begin position="137"/>
        <end position="179"/>
    </location>
</feature>
<feature type="repeat" description="WD 2">
    <location>
        <begin position="182"/>
        <end position="222"/>
    </location>
</feature>
<feature type="strand" evidence="3">
    <location>
        <begin position="3"/>
        <end position="9"/>
    </location>
</feature>
<feature type="strand" evidence="3">
    <location>
        <begin position="16"/>
        <end position="21"/>
    </location>
</feature>
<feature type="helix" evidence="3">
    <location>
        <begin position="26"/>
        <end position="28"/>
    </location>
</feature>
<feature type="strand" evidence="3">
    <location>
        <begin position="31"/>
        <end position="47"/>
    </location>
</feature>
<feature type="strand" evidence="3">
    <location>
        <begin position="50"/>
        <end position="52"/>
    </location>
</feature>
<feature type="strand" evidence="3">
    <location>
        <begin position="55"/>
        <end position="65"/>
    </location>
</feature>
<feature type="strand" evidence="3">
    <location>
        <begin position="70"/>
        <end position="75"/>
    </location>
</feature>
<feature type="strand" evidence="3">
    <location>
        <begin position="80"/>
        <end position="82"/>
    </location>
</feature>
<feature type="strand" evidence="3">
    <location>
        <begin position="97"/>
        <end position="106"/>
    </location>
</feature>
<feature type="strand" evidence="3">
    <location>
        <begin position="111"/>
        <end position="117"/>
    </location>
</feature>
<feature type="strand" evidence="3">
    <location>
        <begin position="120"/>
        <end position="127"/>
    </location>
</feature>
<feature type="turn" evidence="3">
    <location>
        <begin position="129"/>
        <end position="131"/>
    </location>
</feature>
<feature type="strand" evidence="3">
    <location>
        <begin position="137"/>
        <end position="146"/>
    </location>
</feature>
<feature type="strand" evidence="4">
    <location>
        <begin position="148"/>
        <end position="150"/>
    </location>
</feature>
<feature type="strand" evidence="3">
    <location>
        <begin position="151"/>
        <end position="161"/>
    </location>
</feature>
<feature type="strand" evidence="3">
    <location>
        <begin position="164"/>
        <end position="172"/>
    </location>
</feature>
<feature type="strand" evidence="3">
    <location>
        <begin position="175"/>
        <end position="182"/>
    </location>
</feature>
<feature type="strand" evidence="3">
    <location>
        <begin position="187"/>
        <end position="193"/>
    </location>
</feature>
<feature type="strand" evidence="3">
    <location>
        <begin position="196"/>
        <end position="204"/>
    </location>
</feature>
<feature type="strand" evidence="3">
    <location>
        <begin position="207"/>
        <end position="213"/>
    </location>
</feature>
<feature type="turn" evidence="4">
    <location>
        <begin position="214"/>
        <end position="217"/>
    </location>
</feature>
<feature type="helix" evidence="4">
    <location>
        <begin position="218"/>
        <end position="222"/>
    </location>
</feature>
<feature type="strand" evidence="3">
    <location>
        <begin position="234"/>
        <end position="239"/>
    </location>
</feature>
<feature type="helix" evidence="3">
    <location>
        <begin position="240"/>
        <end position="242"/>
    </location>
</feature>
<feature type="strand" evidence="3">
    <location>
        <begin position="252"/>
        <end position="254"/>
    </location>
</feature>
<feature type="strand" evidence="3">
    <location>
        <begin position="256"/>
        <end position="261"/>
    </location>
</feature>
<feature type="turn" evidence="3">
    <location>
        <begin position="262"/>
        <end position="265"/>
    </location>
</feature>
<feature type="strand" evidence="3">
    <location>
        <begin position="267"/>
        <end position="271"/>
    </location>
</feature>
<feature type="strand" evidence="3">
    <location>
        <begin position="275"/>
        <end position="281"/>
    </location>
</feature>
<feature type="strand" evidence="4">
    <location>
        <begin position="285"/>
        <end position="288"/>
    </location>
</feature>
<feature type="helix" evidence="4">
    <location>
        <begin position="293"/>
        <end position="298"/>
    </location>
</feature>
<feature type="strand" evidence="3">
    <location>
        <begin position="306"/>
        <end position="310"/>
    </location>
</feature>
<feature type="strand" evidence="2">
    <location>
        <begin position="319"/>
        <end position="321"/>
    </location>
</feature>
<feature type="strand" evidence="3">
    <location>
        <begin position="328"/>
        <end position="333"/>
    </location>
</feature>
<feature type="turn" evidence="3">
    <location>
        <begin position="334"/>
        <end position="337"/>
    </location>
</feature>
<feature type="strand" evidence="3">
    <location>
        <begin position="338"/>
        <end position="343"/>
    </location>
</feature>
<feature type="strand" evidence="3">
    <location>
        <begin position="351"/>
        <end position="355"/>
    </location>
</feature>
<feature type="strand" evidence="3">
    <location>
        <begin position="360"/>
        <end position="365"/>
    </location>
</feature>
<feature type="strand" evidence="3">
    <location>
        <begin position="369"/>
        <end position="385"/>
    </location>
</feature>
<feature type="helix" evidence="3">
    <location>
        <begin position="386"/>
        <end position="388"/>
    </location>
</feature>
<evidence type="ECO:0000269" key="1">
    <source>
    </source>
</evidence>
<evidence type="ECO:0007829" key="2">
    <source>
        <dbReference type="PDB" id="4FHL"/>
    </source>
</evidence>
<evidence type="ECO:0007829" key="3">
    <source>
        <dbReference type="PDB" id="4GQ1"/>
    </source>
</evidence>
<evidence type="ECO:0007829" key="4">
    <source>
        <dbReference type="PDB" id="4GQ2"/>
    </source>
</evidence>
<protein>
    <recommendedName>
        <fullName>Uncharacterized WD repeat-containing protein C4F10.18</fullName>
    </recommendedName>
</protein>
<keyword id="KW-0002">3D-structure</keyword>
<keyword id="KW-0963">Cytoplasm</keyword>
<keyword id="KW-0539">Nucleus</keyword>
<keyword id="KW-1185">Reference proteome</keyword>
<keyword id="KW-0677">Repeat</keyword>
<keyword id="KW-0853">WD repeat</keyword>
<sequence>MTLSSNQYQLPLNVRPYTTTWCSQSPSCSNLLAIGHDTGITIYCASEEQTPGSTGLTLQELFTIQTGLPTLHLSFSSSCSYSENLHDGDGNVNSSPVYSLFLACVCQDNTVRLIITKNETIITQHVLGGKSGHHNFVNDIDIADVYSADNRLAEQVIASVGDDCTLIIWRLTDEGPILAGYPLSSPGISVQFRPSNPNQLIVGERNGNIRIFDWTLNLSAEENSQTELVKNPWLLTLNTLPLVNTCHSSGIASSLANVRWIGSDGSGILAMCKSGAWLRWNLFANNDYNEISDSTMKLGPKNLLPNVQGISLFPSLLGACPHPRYMDYFATAHSQHGLIQLINTYEKDSNSIPIQLGMPIVDFCWHQDGSHLAIATEGSVLLTRLMGFTRL</sequence>
<comment type="interaction">
    <interactant intactId="EBI-16014622">
        <id>O36030</id>
    </interactant>
    <interactant intactId="EBI-1563733">
        <id>O43044</id>
        <label>nup120</label>
    </interactant>
    <organismsDiffer>false</organismsDiffer>
    <experiments>3</experiments>
</comment>
<comment type="subcellular location">
    <subcellularLocation>
        <location evidence="1">Cytoplasm</location>
    </subcellularLocation>
    <subcellularLocation>
        <location evidence="1">Nucleus</location>
    </subcellularLocation>
</comment>
<reference key="1">
    <citation type="journal article" date="2002" name="Nature">
        <title>The genome sequence of Schizosaccharomyces pombe.</title>
        <authorList>
            <person name="Wood V."/>
            <person name="Gwilliam R."/>
            <person name="Rajandream M.A."/>
            <person name="Lyne M.H."/>
            <person name="Lyne R."/>
            <person name="Stewart A."/>
            <person name="Sgouros J.G."/>
            <person name="Peat N."/>
            <person name="Hayles J."/>
            <person name="Baker S.G."/>
            <person name="Basham D."/>
            <person name="Bowman S."/>
            <person name="Brooks K."/>
            <person name="Brown D."/>
            <person name="Brown S."/>
            <person name="Chillingworth T."/>
            <person name="Churcher C.M."/>
            <person name="Collins M."/>
            <person name="Connor R."/>
            <person name="Cronin A."/>
            <person name="Davis P."/>
            <person name="Feltwell T."/>
            <person name="Fraser A."/>
            <person name="Gentles S."/>
            <person name="Goble A."/>
            <person name="Hamlin N."/>
            <person name="Harris D.E."/>
            <person name="Hidalgo J."/>
            <person name="Hodgson G."/>
            <person name="Holroyd S."/>
            <person name="Hornsby T."/>
            <person name="Howarth S."/>
            <person name="Huckle E.J."/>
            <person name="Hunt S."/>
            <person name="Jagels K."/>
            <person name="James K.D."/>
            <person name="Jones L."/>
            <person name="Jones M."/>
            <person name="Leather S."/>
            <person name="McDonald S."/>
            <person name="McLean J."/>
            <person name="Mooney P."/>
            <person name="Moule S."/>
            <person name="Mungall K.L."/>
            <person name="Murphy L.D."/>
            <person name="Niblett D."/>
            <person name="Odell C."/>
            <person name="Oliver K."/>
            <person name="O'Neil S."/>
            <person name="Pearson D."/>
            <person name="Quail M.A."/>
            <person name="Rabbinowitsch E."/>
            <person name="Rutherford K.M."/>
            <person name="Rutter S."/>
            <person name="Saunders D."/>
            <person name="Seeger K."/>
            <person name="Sharp S."/>
            <person name="Skelton J."/>
            <person name="Simmonds M.N."/>
            <person name="Squares R."/>
            <person name="Squares S."/>
            <person name="Stevens K."/>
            <person name="Taylor K."/>
            <person name="Taylor R.G."/>
            <person name="Tivey A."/>
            <person name="Walsh S.V."/>
            <person name="Warren T."/>
            <person name="Whitehead S."/>
            <person name="Woodward J.R."/>
            <person name="Volckaert G."/>
            <person name="Aert R."/>
            <person name="Robben J."/>
            <person name="Grymonprez B."/>
            <person name="Weltjens I."/>
            <person name="Vanstreels E."/>
            <person name="Rieger M."/>
            <person name="Schaefer M."/>
            <person name="Mueller-Auer S."/>
            <person name="Gabel C."/>
            <person name="Fuchs M."/>
            <person name="Duesterhoeft A."/>
            <person name="Fritzc C."/>
            <person name="Holzer E."/>
            <person name="Moestl D."/>
            <person name="Hilbert H."/>
            <person name="Borzym K."/>
            <person name="Langer I."/>
            <person name="Beck A."/>
            <person name="Lehrach H."/>
            <person name="Reinhardt R."/>
            <person name="Pohl T.M."/>
            <person name="Eger P."/>
            <person name="Zimmermann W."/>
            <person name="Wedler H."/>
            <person name="Wambutt R."/>
            <person name="Purnelle B."/>
            <person name="Goffeau A."/>
            <person name="Cadieu E."/>
            <person name="Dreano S."/>
            <person name="Gloux S."/>
            <person name="Lelaure V."/>
            <person name="Mottier S."/>
            <person name="Galibert F."/>
            <person name="Aves S.J."/>
            <person name="Xiang Z."/>
            <person name="Hunt C."/>
            <person name="Moore K."/>
            <person name="Hurst S.M."/>
            <person name="Lucas M."/>
            <person name="Rochet M."/>
            <person name="Gaillardin C."/>
            <person name="Tallada V.A."/>
            <person name="Garzon A."/>
            <person name="Thode G."/>
            <person name="Daga R.R."/>
            <person name="Cruzado L."/>
            <person name="Jimenez J."/>
            <person name="Sanchez M."/>
            <person name="del Rey F."/>
            <person name="Benito J."/>
            <person name="Dominguez A."/>
            <person name="Revuelta J.L."/>
            <person name="Moreno S."/>
            <person name="Armstrong J."/>
            <person name="Forsburg S.L."/>
            <person name="Cerutti L."/>
            <person name="Lowe T."/>
            <person name="McCombie W.R."/>
            <person name="Paulsen I."/>
            <person name="Potashkin J."/>
            <person name="Shpakovski G.V."/>
            <person name="Ussery D."/>
            <person name="Barrell B.G."/>
            <person name="Nurse P."/>
        </authorList>
    </citation>
    <scope>NUCLEOTIDE SEQUENCE [LARGE SCALE GENOMIC DNA]</scope>
    <source>
        <strain>972 / ATCC 24843</strain>
    </source>
</reference>
<reference key="2">
    <citation type="journal article" date="2006" name="Nat. Biotechnol.">
        <title>ORFeome cloning and global analysis of protein localization in the fission yeast Schizosaccharomyces pombe.</title>
        <authorList>
            <person name="Matsuyama A."/>
            <person name="Arai R."/>
            <person name="Yashiroda Y."/>
            <person name="Shirai A."/>
            <person name="Kamata A."/>
            <person name="Sekido S."/>
            <person name="Kobayashi Y."/>
            <person name="Hashimoto A."/>
            <person name="Hamamoto M."/>
            <person name="Hiraoka Y."/>
            <person name="Horinouchi S."/>
            <person name="Yoshida M."/>
        </authorList>
    </citation>
    <scope>SUBCELLULAR LOCATION [LARGE SCALE ANALYSIS]</scope>
</reference>
<dbReference type="EMBL" id="CU329670">
    <property type="protein sequence ID" value="CAB11721.1"/>
    <property type="molecule type" value="Genomic_DNA"/>
</dbReference>
<dbReference type="PIR" id="T38822">
    <property type="entry name" value="T38822"/>
</dbReference>
<dbReference type="PDB" id="4FHL">
    <property type="method" value="X-ray"/>
    <property type="resolution" value="2.60 A"/>
    <property type="chains" value="A=1-391"/>
</dbReference>
<dbReference type="PDB" id="4FHM">
    <property type="method" value="X-ray"/>
    <property type="resolution" value="4.34 A"/>
    <property type="chains" value="A=1-391"/>
</dbReference>
<dbReference type="PDB" id="4FHN">
    <property type="method" value="X-ray"/>
    <property type="resolution" value="6.99 A"/>
    <property type="chains" value="A/C=1-391"/>
</dbReference>
<dbReference type="PDB" id="4GQ1">
    <property type="method" value="X-ray"/>
    <property type="resolution" value="2.40 A"/>
    <property type="chains" value="A=1-391"/>
</dbReference>
<dbReference type="PDB" id="4GQ2">
    <property type="method" value="X-ray"/>
    <property type="resolution" value="2.40 A"/>
    <property type="chains" value="P=1-391"/>
</dbReference>
<dbReference type="PDBsum" id="4FHL"/>
<dbReference type="PDBsum" id="4FHM"/>
<dbReference type="PDBsum" id="4FHN"/>
<dbReference type="PDBsum" id="4GQ1"/>
<dbReference type="PDBsum" id="4GQ2"/>
<dbReference type="SMR" id="O36030"/>
<dbReference type="BioGRID" id="280007">
    <property type="interactions" value="36"/>
</dbReference>
<dbReference type="DIP" id="DIP-60077N"/>
<dbReference type="FunCoup" id="O36030">
    <property type="interactions" value="176"/>
</dbReference>
<dbReference type="IntAct" id="O36030">
    <property type="interactions" value="1"/>
</dbReference>
<dbReference type="STRING" id="284812.O36030"/>
<dbReference type="PaxDb" id="4896-SPAC4F10.18.1"/>
<dbReference type="EnsemblFungi" id="SPAC4F10.18.1">
    <property type="protein sequence ID" value="SPAC4F10.18.1:pep"/>
    <property type="gene ID" value="SPAC4F10.18"/>
</dbReference>
<dbReference type="KEGG" id="spo:2543592"/>
<dbReference type="PomBase" id="SPAC4F10.18"/>
<dbReference type="VEuPathDB" id="FungiDB:SPAC4F10.18"/>
<dbReference type="eggNOG" id="ENOG502SF1P">
    <property type="taxonomic scope" value="Eukaryota"/>
</dbReference>
<dbReference type="HOGENOM" id="CLU_679999_0_0_1"/>
<dbReference type="InParanoid" id="O36030"/>
<dbReference type="OMA" id="YTIHIGL"/>
<dbReference type="Reactome" id="R-SPO-159227">
    <property type="pathway name" value="Transport of the SLBP independent Mature mRNA"/>
</dbReference>
<dbReference type="Reactome" id="R-SPO-159231">
    <property type="pathway name" value="Transport of Mature mRNA Derived from an Intronless Transcript"/>
</dbReference>
<dbReference type="Reactome" id="R-SPO-159236">
    <property type="pathway name" value="Transport of Mature mRNA derived from an Intron-Containing Transcript"/>
</dbReference>
<dbReference type="Reactome" id="R-SPO-3371453">
    <property type="pathway name" value="Regulation of HSF1-mediated heat shock response"/>
</dbReference>
<dbReference type="Reactome" id="R-SPO-4085377">
    <property type="pathway name" value="SUMOylation of SUMOylation proteins"/>
</dbReference>
<dbReference type="Reactome" id="R-SPO-4551638">
    <property type="pathway name" value="SUMOylation of chromatin organization proteins"/>
</dbReference>
<dbReference type="Reactome" id="R-SPO-4570464">
    <property type="pathway name" value="SUMOylation of RNA binding proteins"/>
</dbReference>
<dbReference type="Reactome" id="R-SPO-5578749">
    <property type="pathway name" value="Transcriptional regulation by small RNAs"/>
</dbReference>
<dbReference type="Reactome" id="R-SPO-9615933">
    <property type="pathway name" value="Postmitotic nuclear pore complex (NPC) reformation"/>
</dbReference>
<dbReference type="EvolutionaryTrace" id="O36030"/>
<dbReference type="PRO" id="PR:O36030"/>
<dbReference type="Proteomes" id="UP000002485">
    <property type="component" value="Chromosome I"/>
</dbReference>
<dbReference type="GO" id="GO:0005829">
    <property type="term" value="C:cytosol"/>
    <property type="evidence" value="ECO:0007005"/>
    <property type="project" value="PomBase"/>
</dbReference>
<dbReference type="GO" id="GO:0005643">
    <property type="term" value="C:nuclear pore"/>
    <property type="evidence" value="ECO:0000314"/>
    <property type="project" value="PomBase"/>
</dbReference>
<dbReference type="GO" id="GO:0031080">
    <property type="term" value="C:nuclear pore outer ring"/>
    <property type="evidence" value="ECO:0000269"/>
    <property type="project" value="PomBase"/>
</dbReference>
<dbReference type="GO" id="GO:0005634">
    <property type="term" value="C:nucleus"/>
    <property type="evidence" value="ECO:0007005"/>
    <property type="project" value="PomBase"/>
</dbReference>
<dbReference type="GO" id="GO:0006913">
    <property type="term" value="P:nucleocytoplasmic transport"/>
    <property type="evidence" value="ECO:0000305"/>
    <property type="project" value="PomBase"/>
</dbReference>
<dbReference type="FunFam" id="2.130.10.10:FF:003823">
    <property type="entry name" value="Uncharacterized WD repeat-containing protein C4F10.18"/>
    <property type="match status" value="1"/>
</dbReference>
<dbReference type="Gene3D" id="2.130.10.10">
    <property type="entry name" value="YVTN repeat-like/Quinoprotein amine dehydrogenase"/>
    <property type="match status" value="1"/>
</dbReference>
<dbReference type="IDEAL" id="IID50301"/>
<dbReference type="InterPro" id="IPR037626">
    <property type="entry name" value="NUP37"/>
</dbReference>
<dbReference type="InterPro" id="IPR015943">
    <property type="entry name" value="WD40/YVTN_repeat-like_dom_sf"/>
</dbReference>
<dbReference type="InterPro" id="IPR036322">
    <property type="entry name" value="WD40_repeat_dom_sf"/>
</dbReference>
<dbReference type="InterPro" id="IPR001680">
    <property type="entry name" value="WD40_rpt"/>
</dbReference>
<dbReference type="PANTHER" id="PTHR22806:SF0">
    <property type="entry name" value="NUCLEOPORIN NUP37"/>
    <property type="match status" value="1"/>
</dbReference>
<dbReference type="PANTHER" id="PTHR22806">
    <property type="entry name" value="NUCLEOPORIN NUP37 P37 -RELATED"/>
    <property type="match status" value="1"/>
</dbReference>
<dbReference type="Pfam" id="PF00400">
    <property type="entry name" value="WD40"/>
    <property type="match status" value="1"/>
</dbReference>
<dbReference type="SMART" id="SM00320">
    <property type="entry name" value="WD40"/>
    <property type="match status" value="4"/>
</dbReference>
<dbReference type="SUPFAM" id="SSF50978">
    <property type="entry name" value="WD40 repeat-like"/>
    <property type="match status" value="1"/>
</dbReference>
<organism>
    <name type="scientific">Schizosaccharomyces pombe (strain 972 / ATCC 24843)</name>
    <name type="common">Fission yeast</name>
    <dbReference type="NCBI Taxonomy" id="284812"/>
    <lineage>
        <taxon>Eukaryota</taxon>
        <taxon>Fungi</taxon>
        <taxon>Dikarya</taxon>
        <taxon>Ascomycota</taxon>
        <taxon>Taphrinomycotina</taxon>
        <taxon>Schizosaccharomycetes</taxon>
        <taxon>Schizosaccharomycetales</taxon>
        <taxon>Schizosaccharomycetaceae</taxon>
        <taxon>Schizosaccharomyces</taxon>
    </lineage>
</organism>
<proteinExistence type="evidence at protein level"/>
<accession>O36030</accession>
<name>YEKI_SCHPO</name>
<gene>
    <name type="ORF">SPAC4F10.18</name>
</gene>